<keyword id="KW-0963">Cytoplasm</keyword>
<keyword id="KW-0369">Histidine metabolism</keyword>
<keyword id="KW-0456">Lyase</keyword>
<keyword id="KW-0520">NAD</keyword>
<feature type="chain" id="PRO_1000129560" description="Urocanate hydratase">
    <location>
        <begin position="1"/>
        <end position="552"/>
    </location>
</feature>
<feature type="active site" evidence="1">
    <location>
        <position position="407"/>
    </location>
</feature>
<feature type="binding site" evidence="1">
    <location>
        <begin position="49"/>
        <end position="50"/>
    </location>
    <ligand>
        <name>NAD(+)</name>
        <dbReference type="ChEBI" id="CHEBI:57540"/>
    </ligand>
</feature>
<feature type="binding site" evidence="1">
    <location>
        <position position="127"/>
    </location>
    <ligand>
        <name>NAD(+)</name>
        <dbReference type="ChEBI" id="CHEBI:57540"/>
    </ligand>
</feature>
<feature type="binding site" evidence="1">
    <location>
        <begin position="173"/>
        <end position="175"/>
    </location>
    <ligand>
        <name>NAD(+)</name>
        <dbReference type="ChEBI" id="CHEBI:57540"/>
    </ligand>
</feature>
<feature type="binding site" evidence="1">
    <location>
        <position position="193"/>
    </location>
    <ligand>
        <name>NAD(+)</name>
        <dbReference type="ChEBI" id="CHEBI:57540"/>
    </ligand>
</feature>
<feature type="binding site" evidence="1">
    <location>
        <begin position="239"/>
        <end position="240"/>
    </location>
    <ligand>
        <name>NAD(+)</name>
        <dbReference type="ChEBI" id="CHEBI:57540"/>
    </ligand>
</feature>
<feature type="binding site" evidence="1">
    <location>
        <begin position="260"/>
        <end position="264"/>
    </location>
    <ligand>
        <name>NAD(+)</name>
        <dbReference type="ChEBI" id="CHEBI:57540"/>
    </ligand>
</feature>
<feature type="binding site" evidence="1">
    <location>
        <begin position="270"/>
        <end position="271"/>
    </location>
    <ligand>
        <name>NAD(+)</name>
        <dbReference type="ChEBI" id="CHEBI:57540"/>
    </ligand>
</feature>
<feature type="binding site" evidence="1">
    <location>
        <position position="319"/>
    </location>
    <ligand>
        <name>NAD(+)</name>
        <dbReference type="ChEBI" id="CHEBI:57540"/>
    </ligand>
</feature>
<feature type="binding site" evidence="1">
    <location>
        <position position="489"/>
    </location>
    <ligand>
        <name>NAD(+)</name>
        <dbReference type="ChEBI" id="CHEBI:57540"/>
    </ligand>
</feature>
<evidence type="ECO:0000255" key="1">
    <source>
        <dbReference type="HAMAP-Rule" id="MF_00577"/>
    </source>
</evidence>
<organism>
    <name type="scientific">Bacillus cereus (strain AH187)</name>
    <dbReference type="NCBI Taxonomy" id="405534"/>
    <lineage>
        <taxon>Bacteria</taxon>
        <taxon>Bacillati</taxon>
        <taxon>Bacillota</taxon>
        <taxon>Bacilli</taxon>
        <taxon>Bacillales</taxon>
        <taxon>Bacillaceae</taxon>
        <taxon>Bacillus</taxon>
        <taxon>Bacillus cereus group</taxon>
    </lineage>
</organism>
<name>HUTU_BACC7</name>
<accession>B7HKJ0</accession>
<comment type="function">
    <text evidence="1">Catalyzes the conversion of urocanate to 4-imidazolone-5-propionate.</text>
</comment>
<comment type="catalytic activity">
    <reaction evidence="1">
        <text>4-imidazolone-5-propanoate = trans-urocanate + H2O</text>
        <dbReference type="Rhea" id="RHEA:13101"/>
        <dbReference type="ChEBI" id="CHEBI:15377"/>
        <dbReference type="ChEBI" id="CHEBI:17771"/>
        <dbReference type="ChEBI" id="CHEBI:77893"/>
        <dbReference type="EC" id="4.2.1.49"/>
    </reaction>
</comment>
<comment type="cofactor">
    <cofactor evidence="1">
        <name>NAD(+)</name>
        <dbReference type="ChEBI" id="CHEBI:57540"/>
    </cofactor>
    <text evidence="1">Binds 1 NAD(+) per subunit.</text>
</comment>
<comment type="pathway">
    <text evidence="1">Amino-acid degradation; L-histidine degradation into L-glutamate; N-formimidoyl-L-glutamate from L-histidine: step 2/3.</text>
</comment>
<comment type="subcellular location">
    <subcellularLocation>
        <location evidence="1">Cytoplasm</location>
    </subcellularLocation>
</comment>
<comment type="similarity">
    <text evidence="1">Belongs to the urocanase family.</text>
</comment>
<proteinExistence type="inferred from homology"/>
<protein>
    <recommendedName>
        <fullName evidence="1">Urocanate hydratase</fullName>
        <shortName evidence="1">Urocanase</shortName>
        <ecNumber evidence="1">4.2.1.49</ecNumber>
    </recommendedName>
    <alternativeName>
        <fullName evidence="1">Imidazolonepropionate hydrolase</fullName>
    </alternativeName>
</protein>
<gene>
    <name evidence="1" type="primary">hutU</name>
    <name type="ordered locus">BCAH187_A3684</name>
</gene>
<dbReference type="EC" id="4.2.1.49" evidence="1"/>
<dbReference type="EMBL" id="CP001177">
    <property type="protein sequence ID" value="ACJ78797.1"/>
    <property type="molecule type" value="Genomic_DNA"/>
</dbReference>
<dbReference type="SMR" id="B7HKJ0"/>
<dbReference type="KEGG" id="bcr:BCAH187_A3684"/>
<dbReference type="HOGENOM" id="CLU_018868_0_1_9"/>
<dbReference type="UniPathway" id="UPA00379">
    <property type="reaction ID" value="UER00550"/>
</dbReference>
<dbReference type="Proteomes" id="UP000002214">
    <property type="component" value="Chromosome"/>
</dbReference>
<dbReference type="GO" id="GO:0005737">
    <property type="term" value="C:cytoplasm"/>
    <property type="evidence" value="ECO:0007669"/>
    <property type="project" value="UniProtKB-SubCell"/>
</dbReference>
<dbReference type="GO" id="GO:0016153">
    <property type="term" value="F:urocanate hydratase activity"/>
    <property type="evidence" value="ECO:0007669"/>
    <property type="project" value="UniProtKB-UniRule"/>
</dbReference>
<dbReference type="GO" id="GO:0019556">
    <property type="term" value="P:L-histidine catabolic process to glutamate and formamide"/>
    <property type="evidence" value="ECO:0007669"/>
    <property type="project" value="UniProtKB-UniPathway"/>
</dbReference>
<dbReference type="GO" id="GO:0019557">
    <property type="term" value="P:L-histidine catabolic process to glutamate and formate"/>
    <property type="evidence" value="ECO:0007669"/>
    <property type="project" value="UniProtKB-UniPathway"/>
</dbReference>
<dbReference type="FunFam" id="3.40.50.10730:FF:000001">
    <property type="entry name" value="Urocanate hydratase"/>
    <property type="match status" value="1"/>
</dbReference>
<dbReference type="Gene3D" id="3.40.50.10730">
    <property type="entry name" value="Urocanase like domains"/>
    <property type="match status" value="1"/>
</dbReference>
<dbReference type="Gene3D" id="3.40.1770.10">
    <property type="entry name" value="Urocanase superfamily"/>
    <property type="match status" value="1"/>
</dbReference>
<dbReference type="HAMAP" id="MF_00577">
    <property type="entry name" value="HutU"/>
    <property type="match status" value="1"/>
</dbReference>
<dbReference type="InterPro" id="IPR055351">
    <property type="entry name" value="Urocanase"/>
</dbReference>
<dbReference type="InterPro" id="IPR023637">
    <property type="entry name" value="Urocanase-like"/>
</dbReference>
<dbReference type="InterPro" id="IPR035401">
    <property type="entry name" value="Urocanase_C"/>
</dbReference>
<dbReference type="InterPro" id="IPR038364">
    <property type="entry name" value="Urocanase_central_sf"/>
</dbReference>
<dbReference type="InterPro" id="IPR023636">
    <property type="entry name" value="Urocanase_CS"/>
</dbReference>
<dbReference type="InterPro" id="IPR035400">
    <property type="entry name" value="Urocanase_N"/>
</dbReference>
<dbReference type="InterPro" id="IPR035085">
    <property type="entry name" value="Urocanase_Rossmann-like"/>
</dbReference>
<dbReference type="InterPro" id="IPR036190">
    <property type="entry name" value="Urocanase_sf"/>
</dbReference>
<dbReference type="NCBIfam" id="TIGR01228">
    <property type="entry name" value="hutU"/>
    <property type="match status" value="1"/>
</dbReference>
<dbReference type="NCBIfam" id="NF003820">
    <property type="entry name" value="PRK05414.1"/>
    <property type="match status" value="1"/>
</dbReference>
<dbReference type="PANTHER" id="PTHR12216">
    <property type="entry name" value="UROCANATE HYDRATASE"/>
    <property type="match status" value="1"/>
</dbReference>
<dbReference type="PANTHER" id="PTHR12216:SF4">
    <property type="entry name" value="UROCANATE HYDRATASE"/>
    <property type="match status" value="1"/>
</dbReference>
<dbReference type="Pfam" id="PF01175">
    <property type="entry name" value="Urocanase"/>
    <property type="match status" value="1"/>
</dbReference>
<dbReference type="Pfam" id="PF17392">
    <property type="entry name" value="Urocanase_C"/>
    <property type="match status" value="1"/>
</dbReference>
<dbReference type="Pfam" id="PF17391">
    <property type="entry name" value="Urocanase_N"/>
    <property type="match status" value="1"/>
</dbReference>
<dbReference type="PIRSF" id="PIRSF001423">
    <property type="entry name" value="Urocanate_hydrat"/>
    <property type="match status" value="1"/>
</dbReference>
<dbReference type="SUPFAM" id="SSF111326">
    <property type="entry name" value="Urocanase"/>
    <property type="match status" value="1"/>
</dbReference>
<dbReference type="PROSITE" id="PS01233">
    <property type="entry name" value="UROCANASE"/>
    <property type="match status" value="1"/>
</dbReference>
<reference key="1">
    <citation type="submission" date="2008-10" db="EMBL/GenBank/DDBJ databases">
        <title>Genome sequence of Bacillus cereus AH187.</title>
        <authorList>
            <person name="Dodson R.J."/>
            <person name="Durkin A.S."/>
            <person name="Rosovitz M.J."/>
            <person name="Rasko D.A."/>
            <person name="Kolsto A.B."/>
            <person name="Okstad O.A."/>
            <person name="Ravel J."/>
            <person name="Sutton G."/>
        </authorList>
    </citation>
    <scope>NUCLEOTIDE SEQUENCE [LARGE SCALE GENOMIC DNA]</scope>
    <source>
        <strain>AH187</strain>
    </source>
</reference>
<sequence length="552" mass="60750">MEKVKQTIRAPRGTELQTKGWVQEAALRMLMNNLDPEVAEKPEELVVYGGIGRAARNWESYNAIVDSLKTLESDETLLVQSGKPVAIFKSHEDAPRVLLANSNLVPKWANWDHFRELEKKGLMMYGQMTAGSWIYIGTQGILQGTYETFGEAARQHFGGSLKGTLTLTAGLGGMGGAQPLAVTMNGGVVIAIDVDKRSIDRRIEKRYCDMYTESLEEALTVANEYKEKKEPISIGLLGNAAEILPELVKRNITPDLVTDQTSAHDPLNGYIPVGYTLEEAAKLREEDPERYVQLSKESMTKHVEAMLTMQAKGAITFDYGNNIRQVAFDEGLKNAFDFPGFVPAFIRPLFCEGKGPFRWVALSGDPEDIYKTDEVILREFADNEHLCNWIRMARQQVEFQGLPSRICWLGYGERAKFGRIINEMVANGELSAPIVIGRDHLDCGSVASPNRETEAMKDGSDAVADWPILNALINSVNGASWVSVHHGGGVGMGYSLHAGMVIVADGTEAAAKRIERVLTSDPGMGVVRHVDAGYDLAVETAKEKGVNIPMMK</sequence>